<name>TRAP_STAEQ</name>
<evidence type="ECO:0000250" key="1"/>
<evidence type="ECO:0000269" key="2">
    <source>
    </source>
</evidence>
<evidence type="ECO:0000305" key="3"/>
<reference key="1">
    <citation type="journal article" date="2005" name="J. Bacteriol.">
        <title>Insights on evolution of virulence and resistance from the complete genome analysis of an early methicillin-resistant Staphylococcus aureus strain and a biofilm-producing methicillin-resistant Staphylococcus epidermidis strain.</title>
        <authorList>
            <person name="Gill S.R."/>
            <person name="Fouts D.E."/>
            <person name="Archer G.L."/>
            <person name="Mongodin E.F."/>
            <person name="DeBoy R.T."/>
            <person name="Ravel J."/>
            <person name="Paulsen I.T."/>
            <person name="Kolonay J.F."/>
            <person name="Brinkac L.M."/>
            <person name="Beanan M.J."/>
            <person name="Dodson R.J."/>
            <person name="Daugherty S.C."/>
            <person name="Madupu R."/>
            <person name="Angiuoli S.V."/>
            <person name="Durkin A.S."/>
            <person name="Haft D.H."/>
            <person name="Vamathevan J.J."/>
            <person name="Khouri H."/>
            <person name="Utterback T.R."/>
            <person name="Lee C."/>
            <person name="Dimitrov G."/>
            <person name="Jiang L."/>
            <person name="Qin H."/>
            <person name="Weidman J."/>
            <person name="Tran K."/>
            <person name="Kang K.H."/>
            <person name="Hance I.R."/>
            <person name="Nelson K.E."/>
            <person name="Fraser C.M."/>
        </authorList>
    </citation>
    <scope>NUCLEOTIDE SEQUENCE [LARGE SCALE GENOMIC DNA]</scope>
    <source>
        <strain>ATCC 35984 / DSM 28319 / BCRC 17069 / CCUG 31568 / BM 3577 / RP62A</strain>
    </source>
</reference>
<reference key="2">
    <citation type="journal article" date="2006" name="FEMS Microbiol. Lett.">
        <title>Comparative proteomic analysis between the invasive and commensal strains of Staphylococcus epidermidis.</title>
        <authorList>
            <person name="Yang X.-M."/>
            <person name="Li N."/>
            <person name="Chen J.-M."/>
            <person name="Ou Y.-Z."/>
            <person name="Jin H."/>
            <person name="Lu H.-J."/>
            <person name="Zhu Y.-L."/>
            <person name="Qin Z.-Q."/>
            <person name="Qu D."/>
            <person name="Yang P.-Y."/>
        </authorList>
    </citation>
    <scope>IDENTIFICATION BY MASS SPECTROMETRY</scope>
    <scope>FUNCTION</scope>
    <scope>EXPRESSION</scope>
</reference>
<comment type="function">
    <text evidence="2">Contributes to virulence and biofilm formation.</text>
</comment>
<comment type="subcellular location">
    <subcellularLocation>
        <location>Membrane</location>
    </subcellularLocation>
    <text evidence="1">Membrane-associated.</text>
</comment>
<comment type="PTM">
    <text evidence="1">Each of the three conserved histidine residues contributes to TRAP phosphorylation. Phosphorylation is essential for TRAP activity (By similarity).</text>
</comment>
<comment type="PTM">
    <text evidence="1">RIP inhibits TRAP phosphorylation.</text>
</comment>
<comment type="miscellaneous">
    <text>Up-expressed in ATCC 35984 compared with ATCC 12228.</text>
</comment>
<comment type="similarity">
    <text evidence="3">Belongs to the TRAP family.</text>
</comment>
<sequence>MYLYTSYGTYQFLNQIKLNHQERSLFQFSTNDSSIILEESEGKSILKHPSSYQVIDSTGEFNEHHFYSAIFVPTSEDHRQQLEKKLLHVDVPLSNFGGFKSYRLLKPTEGSTYKIYFGFANRTAYEDFKASDIFNENFSKDALSQYFGASGQHSSYFERYLYPIEDH</sequence>
<accession>Q5HNA3</accession>
<keyword id="KW-0472">Membrane</keyword>
<keyword id="KW-0597">Phosphoprotein</keyword>
<keyword id="KW-1185">Reference proteome</keyword>
<keyword id="KW-0843">Virulence</keyword>
<feature type="chain" id="PRO_0000289347" description="Signal transduction protein TRAP">
    <location>
        <begin position="1"/>
        <end position="167"/>
    </location>
</feature>
<feature type="domain" description="ABM">
    <location>
        <begin position="66"/>
        <end position="157"/>
    </location>
</feature>
<feature type="modified residue" description="Phosphohistidine" evidence="1">
    <location>
        <position position="65"/>
    </location>
</feature>
<feature type="modified residue" description="Phosphohistidine" evidence="1">
    <location>
        <position position="78"/>
    </location>
</feature>
<feature type="modified residue" description="Phosphohistidine" evidence="1">
    <location>
        <position position="153"/>
    </location>
</feature>
<gene>
    <name type="primary">traP</name>
    <name type="ordered locus">SERP1369</name>
</gene>
<organism>
    <name type="scientific">Staphylococcus epidermidis (strain ATCC 35984 / DSM 28319 / BCRC 17069 / CCUG 31568 / BM 3577 / RP62A)</name>
    <dbReference type="NCBI Taxonomy" id="176279"/>
    <lineage>
        <taxon>Bacteria</taxon>
        <taxon>Bacillati</taxon>
        <taxon>Bacillota</taxon>
        <taxon>Bacilli</taxon>
        <taxon>Bacillales</taxon>
        <taxon>Staphylococcaceae</taxon>
        <taxon>Staphylococcus</taxon>
    </lineage>
</organism>
<proteinExistence type="evidence at protein level"/>
<protein>
    <recommendedName>
        <fullName>Signal transduction protein TRAP</fullName>
    </recommendedName>
    <alternativeName>
        <fullName>Target of RNAIII-activating protein</fullName>
    </alternativeName>
</protein>
<dbReference type="EMBL" id="CP000029">
    <property type="protein sequence ID" value="AAW54746.1"/>
    <property type="molecule type" value="Genomic_DNA"/>
</dbReference>
<dbReference type="RefSeq" id="WP_001829811.1">
    <property type="nucleotide sequence ID" value="NC_002976.3"/>
</dbReference>
<dbReference type="SMR" id="Q5HNA3"/>
<dbReference type="STRING" id="176279.SERP1369"/>
<dbReference type="GeneID" id="50018411"/>
<dbReference type="KEGG" id="ser:SERP1369"/>
<dbReference type="eggNOG" id="COG2329">
    <property type="taxonomic scope" value="Bacteria"/>
</dbReference>
<dbReference type="HOGENOM" id="CLU_116220_0_0_9"/>
<dbReference type="Proteomes" id="UP000000531">
    <property type="component" value="Chromosome"/>
</dbReference>
<dbReference type="GO" id="GO:0016020">
    <property type="term" value="C:membrane"/>
    <property type="evidence" value="ECO:0007669"/>
    <property type="project" value="UniProtKB-SubCell"/>
</dbReference>
<dbReference type="Gene3D" id="3.30.70.100">
    <property type="match status" value="1"/>
</dbReference>
<dbReference type="InterPro" id="IPR007138">
    <property type="entry name" value="ABM_dom"/>
</dbReference>
<dbReference type="InterPro" id="IPR011008">
    <property type="entry name" value="Dimeric_a/b-barrel"/>
</dbReference>
<dbReference type="InterPro" id="IPR050404">
    <property type="entry name" value="Heme-degrading_MO"/>
</dbReference>
<dbReference type="PANTHER" id="PTHR34474">
    <property type="entry name" value="SIGNAL TRANSDUCTION PROTEIN TRAP"/>
    <property type="match status" value="1"/>
</dbReference>
<dbReference type="PANTHER" id="PTHR34474:SF2">
    <property type="entry name" value="SIGNAL TRANSDUCTION PROTEIN TRAP"/>
    <property type="match status" value="1"/>
</dbReference>
<dbReference type="Pfam" id="PF03992">
    <property type="entry name" value="ABM"/>
    <property type="match status" value="1"/>
</dbReference>
<dbReference type="SUPFAM" id="SSF54909">
    <property type="entry name" value="Dimeric alpha+beta barrel"/>
    <property type="match status" value="1"/>
</dbReference>
<dbReference type="PROSITE" id="PS51725">
    <property type="entry name" value="ABM"/>
    <property type="match status" value="1"/>
</dbReference>